<evidence type="ECO:0000255" key="1">
    <source>
        <dbReference type="HAMAP-Rule" id="MF_01678"/>
    </source>
</evidence>
<evidence type="ECO:0000305" key="2"/>
<sequence length="346" mass="37746">MSFRTIEWRDDKVVMIDQTRLPGEEVYCEYADYKSVAEAIRGMVIRGAPAIGVAAAMGVALGAREIIADTYESFFRQMENVCDVMARTRPTAVNLFWAIERMKRVADENRDKPLDQLREILKTEAIRIEQEDLELCKAIGRHGAALIPEGATVLTHCNAGGLATAGYGTALGVIRAAHDAGKKIQVFADETRPWLQGARLTAWELMKDGIPVTLISDNMAGFFMKRGEIACCVVGADRIAANGDTANKIGTYSVAVLAKENNIPFYVAAPTTTLDLSLENGDQIPIEERHSREVTHLHGFPVAPEGIRVRNPAFDVTPARYISAIITEQGVVSGDYVTGLRGLVAP</sequence>
<feature type="chain" id="PRO_0000357189" description="Methylthioribose-1-phosphate isomerase">
    <location>
        <begin position="1"/>
        <end position="346"/>
    </location>
</feature>
<feature type="active site" description="Proton donor" evidence="1">
    <location>
        <position position="237"/>
    </location>
</feature>
<feature type="binding site" evidence="1">
    <location>
        <begin position="46"/>
        <end position="48"/>
    </location>
    <ligand>
        <name>substrate</name>
    </ligand>
</feature>
<feature type="binding site" evidence="1">
    <location>
        <position position="89"/>
    </location>
    <ligand>
        <name>substrate</name>
    </ligand>
</feature>
<feature type="binding site" evidence="1">
    <location>
        <position position="196"/>
    </location>
    <ligand>
        <name>substrate</name>
    </ligand>
</feature>
<feature type="binding site" evidence="1">
    <location>
        <begin position="247"/>
        <end position="248"/>
    </location>
    <ligand>
        <name>substrate</name>
    </ligand>
</feature>
<feature type="site" description="Transition state stabilizer" evidence="1">
    <location>
        <position position="157"/>
    </location>
</feature>
<proteinExistence type="inferred from homology"/>
<reference key="1">
    <citation type="journal article" date="2003" name="Science">
        <title>Genome of Geobacter sulfurreducens: metal reduction in subsurface environments.</title>
        <authorList>
            <person name="Methe B.A."/>
            <person name="Nelson K.E."/>
            <person name="Eisen J.A."/>
            <person name="Paulsen I.T."/>
            <person name="Nelson W.C."/>
            <person name="Heidelberg J.F."/>
            <person name="Wu D."/>
            <person name="Wu M."/>
            <person name="Ward N.L."/>
            <person name="Beanan M.J."/>
            <person name="Dodson R.J."/>
            <person name="Madupu R."/>
            <person name="Brinkac L.M."/>
            <person name="Daugherty S.C."/>
            <person name="DeBoy R.T."/>
            <person name="Durkin A.S."/>
            <person name="Gwinn M.L."/>
            <person name="Kolonay J.F."/>
            <person name="Sullivan S.A."/>
            <person name="Haft D.H."/>
            <person name="Selengut J."/>
            <person name="Davidsen T.M."/>
            <person name="Zafar N."/>
            <person name="White O."/>
            <person name="Tran B."/>
            <person name="Romero C."/>
            <person name="Forberger H.A."/>
            <person name="Weidman J.F."/>
            <person name="Khouri H.M."/>
            <person name="Feldblyum T.V."/>
            <person name="Utterback T.R."/>
            <person name="Van Aken S.E."/>
            <person name="Lovley D.R."/>
            <person name="Fraser C.M."/>
        </authorList>
    </citation>
    <scope>NUCLEOTIDE SEQUENCE [LARGE SCALE GENOMIC DNA]</scope>
    <source>
        <strain>ATCC 51573 / DSM 12127 / PCA</strain>
    </source>
</reference>
<keyword id="KW-0028">Amino-acid biosynthesis</keyword>
<keyword id="KW-0413">Isomerase</keyword>
<keyword id="KW-0486">Methionine biosynthesis</keyword>
<keyword id="KW-1185">Reference proteome</keyword>
<gene>
    <name evidence="1" type="primary">mtnA</name>
    <name type="ordered locus">GSU3379</name>
</gene>
<comment type="function">
    <text evidence="1">Catalyzes the interconversion of methylthioribose-1-phosphate (MTR-1-P) into methylthioribulose-1-phosphate (MTRu-1-P).</text>
</comment>
<comment type="catalytic activity">
    <reaction evidence="1">
        <text>5-(methylsulfanyl)-alpha-D-ribose 1-phosphate = 5-(methylsulfanyl)-D-ribulose 1-phosphate</text>
        <dbReference type="Rhea" id="RHEA:19989"/>
        <dbReference type="ChEBI" id="CHEBI:58533"/>
        <dbReference type="ChEBI" id="CHEBI:58548"/>
        <dbReference type="EC" id="5.3.1.23"/>
    </reaction>
</comment>
<comment type="pathway">
    <text evidence="1">Amino-acid biosynthesis; L-methionine biosynthesis via salvage pathway; L-methionine from S-methyl-5-thio-alpha-D-ribose 1-phosphate: step 1/6.</text>
</comment>
<comment type="similarity">
    <text evidence="2">Belongs to the eIF-2B alpha/beta/delta subunits family. MtnA subfamily.</text>
</comment>
<dbReference type="EC" id="5.3.1.23" evidence="1"/>
<dbReference type="EMBL" id="AE017180">
    <property type="protein sequence ID" value="AAR36769.1"/>
    <property type="molecule type" value="Genomic_DNA"/>
</dbReference>
<dbReference type="RefSeq" id="NP_954419.1">
    <property type="nucleotide sequence ID" value="NC_002939.5"/>
</dbReference>
<dbReference type="RefSeq" id="WP_010943990.1">
    <property type="nucleotide sequence ID" value="NC_002939.5"/>
</dbReference>
<dbReference type="SMR" id="Q746Y8"/>
<dbReference type="STRING" id="243231.GSU3379"/>
<dbReference type="EnsemblBacteria" id="AAR36769">
    <property type="protein sequence ID" value="AAR36769"/>
    <property type="gene ID" value="GSU3379"/>
</dbReference>
<dbReference type="KEGG" id="gsu:GSU3379"/>
<dbReference type="PATRIC" id="fig|243231.5.peg.3401"/>
<dbReference type="eggNOG" id="COG0182">
    <property type="taxonomic scope" value="Bacteria"/>
</dbReference>
<dbReference type="HOGENOM" id="CLU_016218_1_2_7"/>
<dbReference type="InParanoid" id="Q746Y8"/>
<dbReference type="OrthoDB" id="9803436at2"/>
<dbReference type="UniPathway" id="UPA00904">
    <property type="reaction ID" value="UER00874"/>
</dbReference>
<dbReference type="Proteomes" id="UP000000577">
    <property type="component" value="Chromosome"/>
</dbReference>
<dbReference type="GO" id="GO:0046523">
    <property type="term" value="F:S-methyl-5-thioribose-1-phosphate isomerase activity"/>
    <property type="evidence" value="ECO:0000318"/>
    <property type="project" value="GO_Central"/>
</dbReference>
<dbReference type="GO" id="GO:0019509">
    <property type="term" value="P:L-methionine salvage from methylthioadenosine"/>
    <property type="evidence" value="ECO:0000318"/>
    <property type="project" value="GO_Central"/>
</dbReference>
<dbReference type="FunFam" id="1.20.120.420:FF:000001">
    <property type="entry name" value="Methylthioribose-1-phosphate isomerase"/>
    <property type="match status" value="1"/>
</dbReference>
<dbReference type="FunFam" id="3.40.50.10470:FF:000010">
    <property type="entry name" value="Methylthioribose-1-phosphate isomerase"/>
    <property type="match status" value="1"/>
</dbReference>
<dbReference type="Gene3D" id="1.20.120.420">
    <property type="entry name" value="translation initiation factor eif-2b, domain 1"/>
    <property type="match status" value="1"/>
</dbReference>
<dbReference type="Gene3D" id="3.40.50.10470">
    <property type="entry name" value="Translation initiation factor eif-2b, domain 2"/>
    <property type="match status" value="1"/>
</dbReference>
<dbReference type="HAMAP" id="MF_01678">
    <property type="entry name" value="Salvage_MtnA"/>
    <property type="match status" value="1"/>
</dbReference>
<dbReference type="InterPro" id="IPR000649">
    <property type="entry name" value="IF-2B-related"/>
</dbReference>
<dbReference type="InterPro" id="IPR005251">
    <property type="entry name" value="IF-M1Pi"/>
</dbReference>
<dbReference type="InterPro" id="IPR042529">
    <property type="entry name" value="IF_2B-like_C"/>
</dbReference>
<dbReference type="InterPro" id="IPR011559">
    <property type="entry name" value="Initiation_fac_2B_a/b/d"/>
</dbReference>
<dbReference type="InterPro" id="IPR027363">
    <property type="entry name" value="M1Pi_N"/>
</dbReference>
<dbReference type="InterPro" id="IPR037171">
    <property type="entry name" value="NagB/RpiA_transferase-like"/>
</dbReference>
<dbReference type="NCBIfam" id="TIGR00524">
    <property type="entry name" value="eIF-2B_rel"/>
    <property type="match status" value="1"/>
</dbReference>
<dbReference type="NCBIfam" id="NF004326">
    <property type="entry name" value="PRK05720.1"/>
    <property type="match status" value="1"/>
</dbReference>
<dbReference type="NCBIfam" id="TIGR00512">
    <property type="entry name" value="salvage_mtnA"/>
    <property type="match status" value="1"/>
</dbReference>
<dbReference type="PANTHER" id="PTHR43475">
    <property type="entry name" value="METHYLTHIORIBOSE-1-PHOSPHATE ISOMERASE"/>
    <property type="match status" value="1"/>
</dbReference>
<dbReference type="PANTHER" id="PTHR43475:SF1">
    <property type="entry name" value="METHYLTHIORIBOSE-1-PHOSPHATE ISOMERASE"/>
    <property type="match status" value="1"/>
</dbReference>
<dbReference type="Pfam" id="PF01008">
    <property type="entry name" value="IF-2B"/>
    <property type="match status" value="1"/>
</dbReference>
<dbReference type="SUPFAM" id="SSF100950">
    <property type="entry name" value="NagB/RpiA/CoA transferase-like"/>
    <property type="match status" value="1"/>
</dbReference>
<organism>
    <name type="scientific">Geobacter sulfurreducens (strain ATCC 51573 / DSM 12127 / PCA)</name>
    <dbReference type="NCBI Taxonomy" id="243231"/>
    <lineage>
        <taxon>Bacteria</taxon>
        <taxon>Pseudomonadati</taxon>
        <taxon>Thermodesulfobacteriota</taxon>
        <taxon>Desulfuromonadia</taxon>
        <taxon>Geobacterales</taxon>
        <taxon>Geobacteraceae</taxon>
        <taxon>Geobacter</taxon>
    </lineage>
</organism>
<name>MTNA_GEOSL</name>
<protein>
    <recommendedName>
        <fullName evidence="1">Methylthioribose-1-phosphate isomerase</fullName>
        <shortName evidence="1">M1Pi</shortName>
        <shortName evidence="1">MTR-1-P isomerase</shortName>
        <ecNumber evidence="1">5.3.1.23</ecNumber>
    </recommendedName>
    <alternativeName>
        <fullName evidence="1">S-methyl-5-thioribose-1-phosphate isomerase</fullName>
    </alternativeName>
</protein>
<accession>Q746Y8</accession>